<protein>
    <recommendedName>
        <fullName evidence="4">Calmodulin-binding protein 60 F</fullName>
    </recommendedName>
</protein>
<organism evidence="8">
    <name type="scientific">Arabidopsis thaliana</name>
    <name type="common">Mouse-ear cress</name>
    <dbReference type="NCBI Taxonomy" id="3702"/>
    <lineage>
        <taxon>Eukaryota</taxon>
        <taxon>Viridiplantae</taxon>
        <taxon>Streptophyta</taxon>
        <taxon>Embryophyta</taxon>
        <taxon>Tracheophyta</taxon>
        <taxon>Spermatophyta</taxon>
        <taxon>Magnoliopsida</taxon>
        <taxon>eudicotyledons</taxon>
        <taxon>Gunneridae</taxon>
        <taxon>Pentapetalae</taxon>
        <taxon>rosids</taxon>
        <taxon>malvids</taxon>
        <taxon>Brassicales</taxon>
        <taxon>Brassicaceae</taxon>
        <taxon>Camelineae</taxon>
        <taxon>Arabidopsis</taxon>
    </lineage>
</organism>
<proteinExistence type="evidence at transcript level"/>
<feature type="chain" id="PRO_0000433050" description="Calmodulin-binding protein 60 F">
    <location>
        <begin position="1"/>
        <end position="562"/>
    </location>
</feature>
<feature type="region of interest" description="Disordered" evidence="3">
    <location>
        <begin position="1"/>
        <end position="22"/>
    </location>
</feature>
<feature type="region of interest" description="Calmodulin-binding" evidence="1">
    <location>
        <begin position="5"/>
        <end position="84"/>
    </location>
</feature>
<feature type="region of interest" description="DNA-binding" evidence="1">
    <location>
        <begin position="154"/>
        <end position="273"/>
    </location>
</feature>
<feature type="compositionally biased region" description="Basic and acidic residues" evidence="3">
    <location>
        <begin position="12"/>
        <end position="22"/>
    </location>
</feature>
<feature type="splice variant" id="VSP_057666" description="In isoform 2.">
    <location>
        <begin position="1"/>
        <end position="284"/>
    </location>
</feature>
<feature type="sequence conflict" description="In Ref. 1; CAA18193/CAB79818." evidence="5" ref="1">
    <original>L</original>
    <variation>V</variation>
    <location>
        <position position="240"/>
    </location>
</feature>
<dbReference type="EMBL" id="AL022198">
    <property type="protein sequence ID" value="CAA18193.1"/>
    <property type="status" value="ALT_SEQ"/>
    <property type="molecule type" value="Genomic_DNA"/>
</dbReference>
<dbReference type="EMBL" id="AL161578">
    <property type="protein sequence ID" value="CAB79818.1"/>
    <property type="status" value="ALT_SEQ"/>
    <property type="molecule type" value="Genomic_DNA"/>
</dbReference>
<dbReference type="EMBL" id="CP002687">
    <property type="protein sequence ID" value="AEE85843.1"/>
    <property type="molecule type" value="Genomic_DNA"/>
</dbReference>
<dbReference type="EMBL" id="AY062856">
    <property type="protein sequence ID" value="AAL32934.1"/>
    <property type="molecule type" value="mRNA"/>
</dbReference>
<dbReference type="EMBL" id="AY114575">
    <property type="protein sequence ID" value="AAM47894.1"/>
    <property type="molecule type" value="mRNA"/>
</dbReference>
<dbReference type="PIR" id="A85363">
    <property type="entry name" value="A85363"/>
</dbReference>
<dbReference type="RefSeq" id="NP_194829.2">
    <molecule id="F4JR57-1"/>
    <property type="nucleotide sequence ID" value="NM_119250.3"/>
</dbReference>
<dbReference type="FunCoup" id="F4JR57">
    <property type="interactions" value="1"/>
</dbReference>
<dbReference type="iPTMnet" id="F4JR57"/>
<dbReference type="PaxDb" id="3702-AT4G31000.1"/>
<dbReference type="EnsemblPlants" id="AT4G31000.1">
    <molecule id="F4JR57-1"/>
    <property type="protein sequence ID" value="AT4G31000.1"/>
    <property type="gene ID" value="AT4G31000"/>
</dbReference>
<dbReference type="GeneID" id="829227"/>
<dbReference type="Gramene" id="AT4G31000.1">
    <molecule id="F4JR57-1"/>
    <property type="protein sequence ID" value="AT4G31000.1"/>
    <property type="gene ID" value="AT4G31000"/>
</dbReference>
<dbReference type="KEGG" id="ath:AT4G31000"/>
<dbReference type="Araport" id="AT4G31000"/>
<dbReference type="TAIR" id="AT4G31000"/>
<dbReference type="eggNOG" id="ENOG502R2A5">
    <property type="taxonomic scope" value="Eukaryota"/>
</dbReference>
<dbReference type="HOGENOM" id="CLU_031504_3_0_1"/>
<dbReference type="InParanoid" id="F4JR57"/>
<dbReference type="OMA" id="HHIREAK"/>
<dbReference type="PRO" id="PR:F4JR57"/>
<dbReference type="Proteomes" id="UP000006548">
    <property type="component" value="Chromosome 4"/>
</dbReference>
<dbReference type="ExpressionAtlas" id="F4JR57">
    <property type="expression patterns" value="baseline and differential"/>
</dbReference>
<dbReference type="GO" id="GO:0005634">
    <property type="term" value="C:nucleus"/>
    <property type="evidence" value="ECO:0007669"/>
    <property type="project" value="UniProtKB-SubCell"/>
</dbReference>
<dbReference type="GO" id="GO:0005516">
    <property type="term" value="F:calmodulin binding"/>
    <property type="evidence" value="ECO:0007669"/>
    <property type="project" value="UniProtKB-KW"/>
</dbReference>
<dbReference type="GO" id="GO:0003677">
    <property type="term" value="F:DNA binding"/>
    <property type="evidence" value="ECO:0007669"/>
    <property type="project" value="UniProtKB-KW"/>
</dbReference>
<dbReference type="InterPro" id="IPR046829">
    <property type="entry name" value="Calmod_bind_C"/>
</dbReference>
<dbReference type="InterPro" id="IPR046830">
    <property type="entry name" value="Calmod_bind_M"/>
</dbReference>
<dbReference type="InterPro" id="IPR046831">
    <property type="entry name" value="Calmodulin_bind_N"/>
</dbReference>
<dbReference type="InterPro" id="IPR012416">
    <property type="entry name" value="CBP60"/>
</dbReference>
<dbReference type="PANTHER" id="PTHR31713:SF73">
    <property type="entry name" value="CALMODULIN-BINDING PROTEIN 60 F"/>
    <property type="match status" value="1"/>
</dbReference>
<dbReference type="PANTHER" id="PTHR31713">
    <property type="entry name" value="OS02G0177800 PROTEIN"/>
    <property type="match status" value="1"/>
</dbReference>
<dbReference type="Pfam" id="PF20452">
    <property type="entry name" value="Calmod_bind_C"/>
    <property type="match status" value="1"/>
</dbReference>
<dbReference type="Pfam" id="PF20451">
    <property type="entry name" value="Calmod_bind_M"/>
    <property type="match status" value="1"/>
</dbReference>
<dbReference type="Pfam" id="PF07887">
    <property type="entry name" value="Calmodulin_bind"/>
    <property type="match status" value="1"/>
</dbReference>
<name>CB60F_ARATH</name>
<reference key="1">
    <citation type="journal article" date="1999" name="Nature">
        <title>Sequence and analysis of chromosome 4 of the plant Arabidopsis thaliana.</title>
        <authorList>
            <person name="Mayer K.F.X."/>
            <person name="Schueller C."/>
            <person name="Wambutt R."/>
            <person name="Murphy G."/>
            <person name="Volckaert G."/>
            <person name="Pohl T."/>
            <person name="Duesterhoeft A."/>
            <person name="Stiekema W."/>
            <person name="Entian K.-D."/>
            <person name="Terryn N."/>
            <person name="Harris B."/>
            <person name="Ansorge W."/>
            <person name="Brandt P."/>
            <person name="Grivell L.A."/>
            <person name="Rieger M."/>
            <person name="Weichselgartner M."/>
            <person name="de Simone V."/>
            <person name="Obermaier B."/>
            <person name="Mache R."/>
            <person name="Mueller M."/>
            <person name="Kreis M."/>
            <person name="Delseny M."/>
            <person name="Puigdomenech P."/>
            <person name="Watson M."/>
            <person name="Schmidtheini T."/>
            <person name="Reichert B."/>
            <person name="Portetelle D."/>
            <person name="Perez-Alonso M."/>
            <person name="Boutry M."/>
            <person name="Bancroft I."/>
            <person name="Vos P."/>
            <person name="Hoheisel J."/>
            <person name="Zimmermann W."/>
            <person name="Wedler H."/>
            <person name="Ridley P."/>
            <person name="Langham S.-A."/>
            <person name="McCullagh B."/>
            <person name="Bilham L."/>
            <person name="Robben J."/>
            <person name="van der Schueren J."/>
            <person name="Grymonprez B."/>
            <person name="Chuang Y.-J."/>
            <person name="Vandenbussche F."/>
            <person name="Braeken M."/>
            <person name="Weltjens I."/>
            <person name="Voet M."/>
            <person name="Bastiaens I."/>
            <person name="Aert R."/>
            <person name="Defoor E."/>
            <person name="Weitzenegger T."/>
            <person name="Bothe G."/>
            <person name="Ramsperger U."/>
            <person name="Hilbert H."/>
            <person name="Braun M."/>
            <person name="Holzer E."/>
            <person name="Brandt A."/>
            <person name="Peters S."/>
            <person name="van Staveren M."/>
            <person name="Dirkse W."/>
            <person name="Mooijman P."/>
            <person name="Klein Lankhorst R."/>
            <person name="Rose M."/>
            <person name="Hauf J."/>
            <person name="Koetter P."/>
            <person name="Berneiser S."/>
            <person name="Hempel S."/>
            <person name="Feldpausch M."/>
            <person name="Lamberth S."/>
            <person name="Van den Daele H."/>
            <person name="De Keyser A."/>
            <person name="Buysshaert C."/>
            <person name="Gielen J."/>
            <person name="Villarroel R."/>
            <person name="De Clercq R."/>
            <person name="van Montagu M."/>
            <person name="Rogers J."/>
            <person name="Cronin A."/>
            <person name="Quail M.A."/>
            <person name="Bray-Allen S."/>
            <person name="Clark L."/>
            <person name="Doggett J."/>
            <person name="Hall S."/>
            <person name="Kay M."/>
            <person name="Lennard N."/>
            <person name="McLay K."/>
            <person name="Mayes R."/>
            <person name="Pettett A."/>
            <person name="Rajandream M.A."/>
            <person name="Lyne M."/>
            <person name="Benes V."/>
            <person name="Rechmann S."/>
            <person name="Borkova D."/>
            <person name="Bloecker H."/>
            <person name="Scharfe M."/>
            <person name="Grimm M."/>
            <person name="Loehnert T.-H."/>
            <person name="Dose S."/>
            <person name="de Haan M."/>
            <person name="Maarse A.C."/>
            <person name="Schaefer M."/>
            <person name="Mueller-Auer S."/>
            <person name="Gabel C."/>
            <person name="Fuchs M."/>
            <person name="Fartmann B."/>
            <person name="Granderath K."/>
            <person name="Dauner D."/>
            <person name="Herzl A."/>
            <person name="Neumann S."/>
            <person name="Argiriou A."/>
            <person name="Vitale D."/>
            <person name="Liguori R."/>
            <person name="Piravandi E."/>
            <person name="Massenet O."/>
            <person name="Quigley F."/>
            <person name="Clabauld G."/>
            <person name="Muendlein A."/>
            <person name="Felber R."/>
            <person name="Schnabl S."/>
            <person name="Hiller R."/>
            <person name="Schmidt W."/>
            <person name="Lecharny A."/>
            <person name="Aubourg S."/>
            <person name="Chefdor F."/>
            <person name="Cooke R."/>
            <person name="Berger C."/>
            <person name="Monfort A."/>
            <person name="Casacuberta E."/>
            <person name="Gibbons T."/>
            <person name="Weber N."/>
            <person name="Vandenbol M."/>
            <person name="Bargues M."/>
            <person name="Terol J."/>
            <person name="Torres A."/>
            <person name="Perez-Perez A."/>
            <person name="Purnelle B."/>
            <person name="Bent E."/>
            <person name="Johnson S."/>
            <person name="Tacon D."/>
            <person name="Jesse T."/>
            <person name="Heijnen L."/>
            <person name="Schwarz S."/>
            <person name="Scholler P."/>
            <person name="Heber S."/>
            <person name="Francs P."/>
            <person name="Bielke C."/>
            <person name="Frishman D."/>
            <person name="Haase D."/>
            <person name="Lemcke K."/>
            <person name="Mewes H.-W."/>
            <person name="Stocker S."/>
            <person name="Zaccaria P."/>
            <person name="Bevan M."/>
            <person name="Wilson R.K."/>
            <person name="de la Bastide M."/>
            <person name="Habermann K."/>
            <person name="Parnell L."/>
            <person name="Dedhia N."/>
            <person name="Gnoj L."/>
            <person name="Schutz K."/>
            <person name="Huang E."/>
            <person name="Spiegel L."/>
            <person name="Sekhon M."/>
            <person name="Murray J."/>
            <person name="Sheet P."/>
            <person name="Cordes M."/>
            <person name="Abu-Threideh J."/>
            <person name="Stoneking T."/>
            <person name="Kalicki J."/>
            <person name="Graves T."/>
            <person name="Harmon G."/>
            <person name="Edwards J."/>
            <person name="Latreille P."/>
            <person name="Courtney L."/>
            <person name="Cloud J."/>
            <person name="Abbott A."/>
            <person name="Scott K."/>
            <person name="Johnson D."/>
            <person name="Minx P."/>
            <person name="Bentley D."/>
            <person name="Fulton B."/>
            <person name="Miller N."/>
            <person name="Greco T."/>
            <person name="Kemp K."/>
            <person name="Kramer J."/>
            <person name="Fulton L."/>
            <person name="Mardis E."/>
            <person name="Dante M."/>
            <person name="Pepin K."/>
            <person name="Hillier L.W."/>
            <person name="Nelson J."/>
            <person name="Spieth J."/>
            <person name="Ryan E."/>
            <person name="Andrews S."/>
            <person name="Geisel C."/>
            <person name="Layman D."/>
            <person name="Du H."/>
            <person name="Ali J."/>
            <person name="Berghoff A."/>
            <person name="Jones K."/>
            <person name="Drone K."/>
            <person name="Cotton M."/>
            <person name="Joshu C."/>
            <person name="Antonoiu B."/>
            <person name="Zidanic M."/>
            <person name="Strong C."/>
            <person name="Sun H."/>
            <person name="Lamar B."/>
            <person name="Yordan C."/>
            <person name="Ma P."/>
            <person name="Zhong J."/>
            <person name="Preston R."/>
            <person name="Vil D."/>
            <person name="Shekher M."/>
            <person name="Matero A."/>
            <person name="Shah R."/>
            <person name="Swaby I.K."/>
            <person name="O'Shaughnessy A."/>
            <person name="Rodriguez M."/>
            <person name="Hoffman J."/>
            <person name="Till S."/>
            <person name="Granat S."/>
            <person name="Shohdy N."/>
            <person name="Hasegawa A."/>
            <person name="Hameed A."/>
            <person name="Lodhi M."/>
            <person name="Johnson A."/>
            <person name="Chen E."/>
            <person name="Marra M.A."/>
            <person name="Martienssen R."/>
            <person name="McCombie W.R."/>
        </authorList>
    </citation>
    <scope>NUCLEOTIDE SEQUENCE [LARGE SCALE GENOMIC DNA]</scope>
    <source>
        <strain>cv. Columbia</strain>
    </source>
</reference>
<reference key="2">
    <citation type="journal article" date="2017" name="Plant J.">
        <title>Araport11: a complete reannotation of the Arabidopsis thaliana reference genome.</title>
        <authorList>
            <person name="Cheng C.Y."/>
            <person name="Krishnakumar V."/>
            <person name="Chan A.P."/>
            <person name="Thibaud-Nissen F."/>
            <person name="Schobel S."/>
            <person name="Town C.D."/>
        </authorList>
    </citation>
    <scope>GENOME REANNOTATION</scope>
    <source>
        <strain>cv. Columbia</strain>
    </source>
</reference>
<reference key="3">
    <citation type="journal article" date="2003" name="Science">
        <title>Empirical analysis of transcriptional activity in the Arabidopsis genome.</title>
        <authorList>
            <person name="Yamada K."/>
            <person name="Lim J."/>
            <person name="Dale J.M."/>
            <person name="Chen H."/>
            <person name="Shinn P."/>
            <person name="Palm C.J."/>
            <person name="Southwick A.M."/>
            <person name="Wu H.C."/>
            <person name="Kim C.J."/>
            <person name="Nguyen M."/>
            <person name="Pham P.K."/>
            <person name="Cheuk R.F."/>
            <person name="Karlin-Newmann G."/>
            <person name="Liu S.X."/>
            <person name="Lam B."/>
            <person name="Sakano H."/>
            <person name="Wu T."/>
            <person name="Yu G."/>
            <person name="Miranda M."/>
            <person name="Quach H.L."/>
            <person name="Tripp M."/>
            <person name="Chang C.H."/>
            <person name="Lee J.M."/>
            <person name="Toriumi M.J."/>
            <person name="Chan M.M."/>
            <person name="Tang C.C."/>
            <person name="Onodera C.S."/>
            <person name="Deng J.M."/>
            <person name="Akiyama K."/>
            <person name="Ansari Y."/>
            <person name="Arakawa T."/>
            <person name="Banh J."/>
            <person name="Banno F."/>
            <person name="Bowser L."/>
            <person name="Brooks S.Y."/>
            <person name="Carninci P."/>
            <person name="Chao Q."/>
            <person name="Choy N."/>
            <person name="Enju A."/>
            <person name="Goldsmith A.D."/>
            <person name="Gurjal M."/>
            <person name="Hansen N.F."/>
            <person name="Hayashizaki Y."/>
            <person name="Johnson-Hopson C."/>
            <person name="Hsuan V.W."/>
            <person name="Iida K."/>
            <person name="Karnes M."/>
            <person name="Khan S."/>
            <person name="Koesema E."/>
            <person name="Ishida J."/>
            <person name="Jiang P.X."/>
            <person name="Jones T."/>
            <person name="Kawai J."/>
            <person name="Kamiya A."/>
            <person name="Meyers C."/>
            <person name="Nakajima M."/>
            <person name="Narusaka M."/>
            <person name="Seki M."/>
            <person name="Sakurai T."/>
            <person name="Satou M."/>
            <person name="Tamse R."/>
            <person name="Vaysberg M."/>
            <person name="Wallender E.K."/>
            <person name="Wong C."/>
            <person name="Yamamura Y."/>
            <person name="Yuan S."/>
            <person name="Shinozaki K."/>
            <person name="Davis R.W."/>
            <person name="Theologis A."/>
            <person name="Ecker J.R."/>
        </authorList>
    </citation>
    <scope>NUCLEOTIDE SEQUENCE [LARGE SCALE MRNA] (ISOFORM 2)</scope>
    <source>
        <strain>cv. Columbia</strain>
    </source>
</reference>
<reference key="4">
    <citation type="journal article" date="2002" name="J. Biol. Chem.">
        <title>Genes encoding calmodulin-binding proteins in the Arabidopsis genome.</title>
        <authorList>
            <person name="Reddy V.S."/>
            <person name="Ali G.S."/>
            <person name="Reddy A.S.N."/>
        </authorList>
    </citation>
    <scope>GENE FAMILY</scope>
    <scope>NOMENCLATURE</scope>
</reference>
<accession>F4JR57</accession>
<accession>O65550</accession>
<accession>Q8W454</accession>
<sequence length="562" mass="63685">MENSMNNRGHGHNQEHADNLPESKRQKLPALASVIVEAVKVDSLQRLCSSLEPLFRRIVSEEVERAISRLENSKSTSRSTEPNKIQGLDGRNLQLRFRTRMPPHLFTGGKVEGEQGSAIHVVLIDANTGNVIQTGEESMTKLNIVVLDGDFNDEDDKDWTREHFESFEVKEREGKRPILTGDRHVIIKEGVGTLGKLTFTDNSSWIRSRKFRLGVKPATGFHIREAKTEPFAVKDHRGELYKKHYPPVLHDEVWRLDKIAKDGALHKKLLKSNIVTVEDFLQILMKDPQKLRSLLGSGMSNRMWDNTVEHAKTCVLGGKLYAYYTDQTHQTAVVFNHIYEFQGLIANGHFLSSESLNHDQKISADTLVKTAYENWHKVVEYGGKLLNCLPVAKKGIKSLPEPKMAQNHQTQQKALQCQQTVNGYSSDPQHLIEYPFVQQPCYQLRDYTSMESSSVSGSYNGGLEDIFTEEIRARSSEMLETDNMQRLLKTFGISGGFGNRDESIYGFSDQYEAQIDKGYMREGGRGAGKAVVGWLKLKAALRWGIFIRKKAAERRPQIVEID</sequence>
<evidence type="ECO:0000250" key="1">
    <source>
        <dbReference type="UniProtKB" id="F4K2R6"/>
    </source>
</evidence>
<evidence type="ECO:0000250" key="2">
    <source>
        <dbReference type="UniProtKB" id="Q9C9T2"/>
    </source>
</evidence>
<evidence type="ECO:0000256" key="3">
    <source>
        <dbReference type="SAM" id="MobiDB-lite"/>
    </source>
</evidence>
<evidence type="ECO:0000303" key="4">
    <source>
    </source>
</evidence>
<evidence type="ECO:0000305" key="5"/>
<evidence type="ECO:0000312" key="6">
    <source>
        <dbReference type="Araport" id="AT4G31000"/>
    </source>
</evidence>
<evidence type="ECO:0000312" key="7">
    <source>
        <dbReference type="EMBL" id="CAA18193.1"/>
    </source>
</evidence>
<evidence type="ECO:0000312" key="8">
    <source>
        <dbReference type="Proteomes" id="UP000006548"/>
    </source>
</evidence>
<gene>
    <name evidence="4" type="primary">CBP60F</name>
    <name evidence="6" type="ordered locus">At4g31000</name>
    <name evidence="7" type="ORF">F6I18.90</name>
</gene>
<comment type="function">
    <text evidence="1">Transcription activator that binds DNA in a sequence-specific manner, likely 5'-GAAATTTTGG-3', to promote the expression of target genes.</text>
</comment>
<comment type="subunit">
    <text evidence="1">Interacts with calmodulin (CaM).</text>
</comment>
<comment type="subcellular location">
    <subcellularLocation>
        <location evidence="2">Nucleus</location>
    </subcellularLocation>
</comment>
<comment type="alternative products">
    <event type="alternative splicing"/>
    <isoform>
        <id>F4JR57-1</id>
        <name>1</name>
        <sequence type="displayed"/>
    </isoform>
    <isoform>
        <id>F4JR57-2</id>
        <name>2</name>
        <sequence type="described" ref="VSP_057666"/>
    </isoform>
    <text evidence="5">Additional isoforms seem to exist.</text>
</comment>
<comment type="similarity">
    <text evidence="5">Belongs to the plant ACBP60 protein family.</text>
</comment>
<comment type="sequence caution" evidence="5">
    <conflict type="erroneous gene model prediction">
        <sequence resource="EMBL-CDS" id="CAA18193"/>
    </conflict>
</comment>
<comment type="sequence caution" evidence="5">
    <conflict type="erroneous gene model prediction">
        <sequence resource="EMBL-CDS" id="CAB79818"/>
    </conflict>
</comment>
<keyword id="KW-0010">Activator</keyword>
<keyword id="KW-0025">Alternative splicing</keyword>
<keyword id="KW-0112">Calmodulin-binding</keyword>
<keyword id="KW-0238">DNA-binding</keyword>
<keyword id="KW-0539">Nucleus</keyword>
<keyword id="KW-1185">Reference proteome</keyword>
<keyword id="KW-0804">Transcription</keyword>
<keyword id="KW-0805">Transcription regulation</keyword>